<accession>P0AEA6</accession>
<accession>P18404</accession>
<accession>P77115</accession>
<keyword id="KW-0997">Cell inner membrane</keyword>
<keyword id="KW-1003">Cell membrane</keyword>
<keyword id="KW-0350">Heme biosynthesis</keyword>
<keyword id="KW-0472">Membrane</keyword>
<keyword id="KW-1185">Reference proteome</keyword>
<keyword id="KW-0808">Transferase</keyword>
<keyword id="KW-0812">Transmembrane</keyword>
<keyword id="KW-1133">Transmembrane helix</keyword>
<dbReference type="EC" id="2.5.1.141" evidence="1"/>
<dbReference type="EMBL" id="AE014075">
    <property type="protein sequence ID" value="AAN79017.1"/>
    <property type="molecule type" value="Genomic_DNA"/>
</dbReference>
<dbReference type="RefSeq" id="WP_000971336.1">
    <property type="nucleotide sequence ID" value="NZ_CP051263.1"/>
</dbReference>
<dbReference type="SMR" id="P0AEA6"/>
<dbReference type="STRING" id="199310.c0539"/>
<dbReference type="GeneID" id="75202853"/>
<dbReference type="KEGG" id="ecc:c0539"/>
<dbReference type="eggNOG" id="COG0109">
    <property type="taxonomic scope" value="Bacteria"/>
</dbReference>
<dbReference type="HOGENOM" id="CLU_029631_0_0_6"/>
<dbReference type="BioCyc" id="ECOL199310:C0539-MONOMER"/>
<dbReference type="UniPathway" id="UPA00834">
    <property type="reaction ID" value="UER00712"/>
</dbReference>
<dbReference type="Proteomes" id="UP000001410">
    <property type="component" value="Chromosome"/>
</dbReference>
<dbReference type="GO" id="GO:0005886">
    <property type="term" value="C:plasma membrane"/>
    <property type="evidence" value="ECO:0007669"/>
    <property type="project" value="UniProtKB-SubCell"/>
</dbReference>
<dbReference type="GO" id="GO:0008495">
    <property type="term" value="F:protoheme IX farnesyltransferase activity"/>
    <property type="evidence" value="ECO:0007669"/>
    <property type="project" value="UniProtKB-UniRule"/>
</dbReference>
<dbReference type="GO" id="GO:0048034">
    <property type="term" value="P:heme O biosynthetic process"/>
    <property type="evidence" value="ECO:0007669"/>
    <property type="project" value="UniProtKB-UniRule"/>
</dbReference>
<dbReference type="CDD" id="cd13957">
    <property type="entry name" value="PT_UbiA_Cox10"/>
    <property type="match status" value="1"/>
</dbReference>
<dbReference type="FunFam" id="1.10.357.140:FF:000001">
    <property type="entry name" value="Protoheme IX farnesyltransferase"/>
    <property type="match status" value="1"/>
</dbReference>
<dbReference type="Gene3D" id="1.10.357.140">
    <property type="entry name" value="UbiA prenyltransferase"/>
    <property type="match status" value="1"/>
</dbReference>
<dbReference type="HAMAP" id="MF_00154">
    <property type="entry name" value="CyoE_CtaB"/>
    <property type="match status" value="1"/>
</dbReference>
<dbReference type="InterPro" id="IPR006369">
    <property type="entry name" value="Protohaem_IX_farnesylTrfase"/>
</dbReference>
<dbReference type="InterPro" id="IPR000537">
    <property type="entry name" value="UbiA_prenyltransferase"/>
</dbReference>
<dbReference type="InterPro" id="IPR030470">
    <property type="entry name" value="UbiA_prenylTrfase_CS"/>
</dbReference>
<dbReference type="InterPro" id="IPR044878">
    <property type="entry name" value="UbiA_sf"/>
</dbReference>
<dbReference type="NCBIfam" id="TIGR01473">
    <property type="entry name" value="cyoE_ctaB"/>
    <property type="match status" value="1"/>
</dbReference>
<dbReference type="NCBIfam" id="NF003348">
    <property type="entry name" value="PRK04375.1-1"/>
    <property type="match status" value="1"/>
</dbReference>
<dbReference type="PANTHER" id="PTHR43448">
    <property type="entry name" value="PROTOHEME IX FARNESYLTRANSFERASE, MITOCHONDRIAL"/>
    <property type="match status" value="1"/>
</dbReference>
<dbReference type="PANTHER" id="PTHR43448:SF2">
    <property type="entry name" value="PROTOHEME IX FARNESYLTRANSFERASE, MITOCHONDRIAL"/>
    <property type="match status" value="1"/>
</dbReference>
<dbReference type="Pfam" id="PF01040">
    <property type="entry name" value="UbiA"/>
    <property type="match status" value="1"/>
</dbReference>
<dbReference type="PROSITE" id="PS00943">
    <property type="entry name" value="UBIA"/>
    <property type="match status" value="1"/>
</dbReference>
<reference key="1">
    <citation type="journal article" date="2002" name="Proc. Natl. Acad. Sci. U.S.A.">
        <title>Extensive mosaic structure revealed by the complete genome sequence of uropathogenic Escherichia coli.</title>
        <authorList>
            <person name="Welch R.A."/>
            <person name="Burland V."/>
            <person name="Plunkett G. III"/>
            <person name="Redford P."/>
            <person name="Roesch P."/>
            <person name="Rasko D."/>
            <person name="Buckles E.L."/>
            <person name="Liou S.-R."/>
            <person name="Boutin A."/>
            <person name="Hackett J."/>
            <person name="Stroud D."/>
            <person name="Mayhew G.F."/>
            <person name="Rose D.J."/>
            <person name="Zhou S."/>
            <person name="Schwartz D.C."/>
            <person name="Perna N.T."/>
            <person name="Mobley H.L.T."/>
            <person name="Donnenberg M.S."/>
            <person name="Blattner F.R."/>
        </authorList>
    </citation>
    <scope>NUCLEOTIDE SEQUENCE [LARGE SCALE GENOMIC DNA]</scope>
    <source>
        <strain>CFT073 / ATCC 700928 / UPEC</strain>
    </source>
</reference>
<protein>
    <recommendedName>
        <fullName evidence="1">Protoheme IX farnesyltransferase</fullName>
        <ecNumber evidence="1">2.5.1.141</ecNumber>
    </recommendedName>
    <alternativeName>
        <fullName evidence="1">Heme B farnesyltransferase</fullName>
    </alternativeName>
    <alternativeName>
        <fullName evidence="1">Heme O synthase</fullName>
    </alternativeName>
</protein>
<organism>
    <name type="scientific">Escherichia coli O6:H1 (strain CFT073 / ATCC 700928 / UPEC)</name>
    <dbReference type="NCBI Taxonomy" id="199310"/>
    <lineage>
        <taxon>Bacteria</taxon>
        <taxon>Pseudomonadati</taxon>
        <taxon>Pseudomonadota</taxon>
        <taxon>Gammaproteobacteria</taxon>
        <taxon>Enterobacterales</taxon>
        <taxon>Enterobacteriaceae</taxon>
        <taxon>Escherichia</taxon>
    </lineage>
</organism>
<proteinExistence type="inferred from homology"/>
<evidence type="ECO:0000255" key="1">
    <source>
        <dbReference type="HAMAP-Rule" id="MF_00154"/>
    </source>
</evidence>
<feature type="chain" id="PRO_0000162897" description="Protoheme IX farnesyltransferase">
    <location>
        <begin position="1"/>
        <end position="296"/>
    </location>
</feature>
<feature type="topological domain" description="Cytoplasmic" evidence="1">
    <location>
        <begin position="1"/>
        <end position="9"/>
    </location>
</feature>
<feature type="transmembrane region" description="Helical" evidence="1">
    <location>
        <begin position="10"/>
        <end position="28"/>
    </location>
</feature>
<feature type="topological domain" description="Periplasmic" evidence="1">
    <location>
        <begin position="29"/>
        <end position="37"/>
    </location>
</feature>
<feature type="transmembrane region" description="Helical" evidence="1">
    <location>
        <begin position="38"/>
        <end position="56"/>
    </location>
</feature>
<feature type="topological domain" description="Cytoplasmic" evidence="1">
    <location>
        <begin position="57"/>
        <end position="78"/>
    </location>
</feature>
<feature type="transmembrane region" description="Helical" evidence="1">
    <location>
        <begin position="79"/>
        <end position="97"/>
    </location>
</feature>
<feature type="topological domain" description="Periplasmic" evidence="1">
    <location>
        <begin position="98"/>
        <end position="107"/>
    </location>
</feature>
<feature type="transmembrane region" description="Helical" evidence="1">
    <location>
        <begin position="108"/>
        <end position="126"/>
    </location>
</feature>
<feature type="topological domain" description="Cytoplasmic" evidence="1">
    <location>
        <begin position="127"/>
        <end position="197"/>
    </location>
</feature>
<feature type="transmembrane region" description="Helical" evidence="1">
    <location>
        <begin position="198"/>
        <end position="216"/>
    </location>
</feature>
<feature type="topological domain" description="Periplasmic" evidence="1">
    <location>
        <begin position="217"/>
        <end position="228"/>
    </location>
</feature>
<feature type="transmembrane region" description="Helical" evidence="1">
    <location>
        <begin position="229"/>
        <end position="247"/>
    </location>
</feature>
<feature type="topological domain" description="Cytoplasmic" evidence="1">
    <location>
        <begin position="248"/>
        <end position="268"/>
    </location>
</feature>
<feature type="transmembrane region" description="Helical" evidence="1">
    <location>
        <begin position="269"/>
        <end position="287"/>
    </location>
</feature>
<feature type="topological domain" description="Periplasmic" evidence="1">
    <location>
        <begin position="288"/>
        <end position="296"/>
    </location>
</feature>
<sequence>MMFKQYLQVTKPGIIFGNLISVIGGFLLASKGSIDYPLFIYTLVGVSLVVASGCVFNNYIDRDIDRKMERTKNRVLVKGLISPAVSLVYATLLGIAGFMLLWFGANPLACWLGVMGFVVYVGVYSLYMKRHSVYGTLIGSLSGAAPPVIGYCAVTGEFDSGAAILLAIFSLWQMPHSYAIAIFRFKDYQAANIPVLPVVKGISVAKNHITLYIIAFAVATLMLSLGGYAGYKYLVVAAAVSVWWLGMALRGYKVADDRIWARKLFGFSIIAITALSVMMSVDFMVPDSHTLLAAVW</sequence>
<gene>
    <name evidence="1" type="primary">cyoE</name>
    <name type="ordered locus">c0539</name>
</gene>
<comment type="function">
    <text evidence="1">Converts heme B (protoheme IX) to heme O by substitution of the vinyl group on carbon 2 of heme B porphyrin ring with a hydroxyethyl farnesyl side group.</text>
</comment>
<comment type="catalytic activity">
    <reaction evidence="1">
        <text>heme b + (2E,6E)-farnesyl diphosphate + H2O = Fe(II)-heme o + diphosphate</text>
        <dbReference type="Rhea" id="RHEA:28070"/>
        <dbReference type="ChEBI" id="CHEBI:15377"/>
        <dbReference type="ChEBI" id="CHEBI:33019"/>
        <dbReference type="ChEBI" id="CHEBI:60344"/>
        <dbReference type="ChEBI" id="CHEBI:60530"/>
        <dbReference type="ChEBI" id="CHEBI:175763"/>
        <dbReference type="EC" id="2.5.1.141"/>
    </reaction>
</comment>
<comment type="pathway">
    <text evidence="1">Porphyrin-containing compound metabolism; heme O biosynthesis; heme O from protoheme: step 1/1.</text>
</comment>
<comment type="subcellular location">
    <subcellularLocation>
        <location evidence="1">Cell inner membrane</location>
        <topology evidence="1">Multi-pass membrane protein</topology>
    </subcellularLocation>
</comment>
<comment type="miscellaneous">
    <text evidence="1">Carbon 2 of the heme B porphyrin ring is defined according to the Fischer nomenclature.</text>
</comment>
<comment type="similarity">
    <text evidence="1">Belongs to the UbiA prenyltransferase family. Protoheme IX farnesyltransferase subfamily.</text>
</comment>
<name>CYOE_ECOL6</name>